<gene>
    <name evidence="1" type="primary">ribBA</name>
    <name type="synonym">ribA</name>
    <name type="ordered locus">aq_350</name>
</gene>
<reference key="1">
    <citation type="journal article" date="1998" name="Nature">
        <title>The complete genome of the hyperthermophilic bacterium Aquifex aeolicus.</title>
        <authorList>
            <person name="Deckert G."/>
            <person name="Warren P.V."/>
            <person name="Gaasterland T."/>
            <person name="Young W.G."/>
            <person name="Lenox A.L."/>
            <person name="Graham D.E."/>
            <person name="Overbeek R."/>
            <person name="Snead M.A."/>
            <person name="Keller M."/>
            <person name="Aujay M."/>
            <person name="Huber R."/>
            <person name="Feldman R.A."/>
            <person name="Short J.M."/>
            <person name="Olsen G.J."/>
            <person name="Swanson R.V."/>
        </authorList>
    </citation>
    <scope>NUCLEOTIDE SEQUENCE [LARGE SCALE GENOMIC DNA]</scope>
    <source>
        <strain>VF5</strain>
    </source>
</reference>
<name>RIBBA_AQUAE</name>
<keyword id="KW-0342">GTP-binding</keyword>
<keyword id="KW-0378">Hydrolase</keyword>
<keyword id="KW-0456">Lyase</keyword>
<keyword id="KW-0460">Magnesium</keyword>
<keyword id="KW-0464">Manganese</keyword>
<keyword id="KW-0479">Metal-binding</keyword>
<keyword id="KW-0511">Multifunctional enzyme</keyword>
<keyword id="KW-0547">Nucleotide-binding</keyword>
<keyword id="KW-1185">Reference proteome</keyword>
<keyword id="KW-0686">Riboflavin biosynthesis</keyword>
<keyword id="KW-0862">Zinc</keyword>
<evidence type="ECO:0000255" key="1">
    <source>
        <dbReference type="HAMAP-Rule" id="MF_01283"/>
    </source>
</evidence>
<feature type="chain" id="PRO_0000151719" description="Riboflavin biosynthesis protein RibBA">
    <location>
        <begin position="1"/>
        <end position="406"/>
    </location>
</feature>
<feature type="region of interest" description="DHBP synthase">
    <location>
        <begin position="1"/>
        <end position="209"/>
    </location>
</feature>
<feature type="region of interest" description="GTP cyclohydrolase II">
    <location>
        <begin position="210"/>
        <end position="406"/>
    </location>
</feature>
<feature type="active site" description="Proton acceptor; for GTP cyclohydrolase activity" evidence="1">
    <location>
        <position position="338"/>
    </location>
</feature>
<feature type="active site" description="Nucleophile; for GTP cyclohydrolase activity" evidence="1">
    <location>
        <position position="340"/>
    </location>
</feature>
<feature type="binding site" evidence="1">
    <location>
        <begin position="33"/>
        <end position="34"/>
    </location>
    <ligand>
        <name>D-ribulose 5-phosphate</name>
        <dbReference type="ChEBI" id="CHEBI:58121"/>
    </ligand>
</feature>
<feature type="binding site" evidence="1">
    <location>
        <position position="34"/>
    </location>
    <ligand>
        <name>Mg(2+)</name>
        <dbReference type="ChEBI" id="CHEBI:18420"/>
        <label>1</label>
    </ligand>
</feature>
<feature type="binding site" evidence="1">
    <location>
        <position position="34"/>
    </location>
    <ligand>
        <name>Mg(2+)</name>
        <dbReference type="ChEBI" id="CHEBI:18420"/>
        <label>2</label>
    </ligand>
</feature>
<feature type="binding site" evidence="1">
    <location>
        <position position="38"/>
    </location>
    <ligand>
        <name>D-ribulose 5-phosphate</name>
        <dbReference type="ChEBI" id="CHEBI:58121"/>
    </ligand>
</feature>
<feature type="binding site" evidence="1">
    <location>
        <begin position="148"/>
        <end position="152"/>
    </location>
    <ligand>
        <name>D-ribulose 5-phosphate</name>
        <dbReference type="ChEBI" id="CHEBI:58121"/>
    </ligand>
</feature>
<feature type="binding site" evidence="1">
    <location>
        <position position="151"/>
    </location>
    <ligand>
        <name>Mg(2+)</name>
        <dbReference type="ChEBI" id="CHEBI:18420"/>
        <label>2</label>
    </ligand>
</feature>
<feature type="binding site" evidence="1">
    <location>
        <position position="172"/>
    </location>
    <ligand>
        <name>D-ribulose 5-phosphate</name>
        <dbReference type="ChEBI" id="CHEBI:58121"/>
    </ligand>
</feature>
<feature type="binding site" evidence="1">
    <location>
        <begin position="260"/>
        <end position="264"/>
    </location>
    <ligand>
        <name>GTP</name>
        <dbReference type="ChEBI" id="CHEBI:37565"/>
    </ligand>
</feature>
<feature type="binding site" evidence="1">
    <location>
        <position position="265"/>
    </location>
    <ligand>
        <name>Zn(2+)</name>
        <dbReference type="ChEBI" id="CHEBI:29105"/>
        <note>catalytic</note>
    </ligand>
</feature>
<feature type="binding site" evidence="1">
    <location>
        <position position="276"/>
    </location>
    <ligand>
        <name>Zn(2+)</name>
        <dbReference type="ChEBI" id="CHEBI:29105"/>
        <note>catalytic</note>
    </ligand>
</feature>
<feature type="binding site" evidence="1">
    <location>
        <position position="278"/>
    </location>
    <ligand>
        <name>Zn(2+)</name>
        <dbReference type="ChEBI" id="CHEBI:29105"/>
        <note>catalytic</note>
    </ligand>
</feature>
<feature type="binding site" evidence="1">
    <location>
        <position position="281"/>
    </location>
    <ligand>
        <name>GTP</name>
        <dbReference type="ChEBI" id="CHEBI:37565"/>
    </ligand>
</feature>
<feature type="binding site" evidence="1">
    <location>
        <begin position="304"/>
        <end position="306"/>
    </location>
    <ligand>
        <name>GTP</name>
        <dbReference type="ChEBI" id="CHEBI:37565"/>
    </ligand>
</feature>
<feature type="binding site" evidence="1">
    <location>
        <position position="326"/>
    </location>
    <ligand>
        <name>GTP</name>
        <dbReference type="ChEBI" id="CHEBI:37565"/>
    </ligand>
</feature>
<feature type="binding site" evidence="1">
    <location>
        <position position="361"/>
    </location>
    <ligand>
        <name>GTP</name>
        <dbReference type="ChEBI" id="CHEBI:37565"/>
    </ligand>
</feature>
<feature type="binding site" evidence="1">
    <location>
        <position position="366"/>
    </location>
    <ligand>
        <name>GTP</name>
        <dbReference type="ChEBI" id="CHEBI:37565"/>
    </ligand>
</feature>
<feature type="site" description="Essential for DHBP synthase activity" evidence="1">
    <location>
        <position position="134"/>
    </location>
</feature>
<feature type="site" description="Essential for DHBP synthase activity" evidence="1">
    <location>
        <position position="172"/>
    </location>
</feature>
<dbReference type="EC" id="4.1.99.12" evidence="1"/>
<dbReference type="EC" id="3.5.4.25" evidence="1"/>
<dbReference type="EMBL" id="AE000657">
    <property type="protein sequence ID" value="AAC06638.1"/>
    <property type="molecule type" value="Genomic_DNA"/>
</dbReference>
<dbReference type="PIR" id="C70331">
    <property type="entry name" value="C70331"/>
</dbReference>
<dbReference type="RefSeq" id="NP_213239.1">
    <property type="nucleotide sequence ID" value="NC_000918.1"/>
</dbReference>
<dbReference type="RefSeq" id="WP_010880177.1">
    <property type="nucleotide sequence ID" value="NC_000918.1"/>
</dbReference>
<dbReference type="SMR" id="O66679"/>
<dbReference type="FunCoup" id="O66679">
    <property type="interactions" value="318"/>
</dbReference>
<dbReference type="STRING" id="224324.aq_350"/>
<dbReference type="EnsemblBacteria" id="AAC06638">
    <property type="protein sequence ID" value="AAC06638"/>
    <property type="gene ID" value="aq_350"/>
</dbReference>
<dbReference type="KEGG" id="aae:aq_350"/>
<dbReference type="PATRIC" id="fig|224324.8.peg.283"/>
<dbReference type="eggNOG" id="COG0108">
    <property type="taxonomic scope" value="Bacteria"/>
</dbReference>
<dbReference type="eggNOG" id="COG0807">
    <property type="taxonomic scope" value="Bacteria"/>
</dbReference>
<dbReference type="HOGENOM" id="CLU_020273_1_2_0"/>
<dbReference type="InParanoid" id="O66679"/>
<dbReference type="OrthoDB" id="9793111at2"/>
<dbReference type="UniPathway" id="UPA00275">
    <property type="reaction ID" value="UER00399"/>
</dbReference>
<dbReference type="UniPathway" id="UPA00275">
    <property type="reaction ID" value="UER00400"/>
</dbReference>
<dbReference type="Proteomes" id="UP000000798">
    <property type="component" value="Chromosome"/>
</dbReference>
<dbReference type="GO" id="GO:0005829">
    <property type="term" value="C:cytosol"/>
    <property type="evidence" value="ECO:0000318"/>
    <property type="project" value="GO_Central"/>
</dbReference>
<dbReference type="GO" id="GO:0008686">
    <property type="term" value="F:3,4-dihydroxy-2-butanone-4-phosphate synthase activity"/>
    <property type="evidence" value="ECO:0007669"/>
    <property type="project" value="UniProtKB-UniRule"/>
</dbReference>
<dbReference type="GO" id="GO:0005525">
    <property type="term" value="F:GTP binding"/>
    <property type="evidence" value="ECO:0007669"/>
    <property type="project" value="UniProtKB-KW"/>
</dbReference>
<dbReference type="GO" id="GO:0003935">
    <property type="term" value="F:GTP cyclohydrolase II activity"/>
    <property type="evidence" value="ECO:0000318"/>
    <property type="project" value="GO_Central"/>
</dbReference>
<dbReference type="GO" id="GO:0000287">
    <property type="term" value="F:magnesium ion binding"/>
    <property type="evidence" value="ECO:0007669"/>
    <property type="project" value="UniProtKB-UniRule"/>
</dbReference>
<dbReference type="GO" id="GO:0030145">
    <property type="term" value="F:manganese ion binding"/>
    <property type="evidence" value="ECO:0007669"/>
    <property type="project" value="UniProtKB-UniRule"/>
</dbReference>
<dbReference type="GO" id="GO:0008270">
    <property type="term" value="F:zinc ion binding"/>
    <property type="evidence" value="ECO:0007669"/>
    <property type="project" value="UniProtKB-UniRule"/>
</dbReference>
<dbReference type="GO" id="GO:0009231">
    <property type="term" value="P:riboflavin biosynthetic process"/>
    <property type="evidence" value="ECO:0000318"/>
    <property type="project" value="GO_Central"/>
</dbReference>
<dbReference type="CDD" id="cd00641">
    <property type="entry name" value="GTP_cyclohydro2"/>
    <property type="match status" value="1"/>
</dbReference>
<dbReference type="FunFam" id="3.40.50.10990:FF:000001">
    <property type="entry name" value="Riboflavin biosynthesis protein RibBA"/>
    <property type="match status" value="1"/>
</dbReference>
<dbReference type="FunFam" id="3.90.870.10:FF:000001">
    <property type="entry name" value="Riboflavin biosynthesis protein RibBA"/>
    <property type="match status" value="1"/>
</dbReference>
<dbReference type="Gene3D" id="3.90.870.10">
    <property type="entry name" value="DHBP synthase"/>
    <property type="match status" value="1"/>
</dbReference>
<dbReference type="Gene3D" id="3.40.50.10990">
    <property type="entry name" value="GTP cyclohydrolase II"/>
    <property type="match status" value="1"/>
</dbReference>
<dbReference type="HAMAP" id="MF_00179">
    <property type="entry name" value="RibA"/>
    <property type="match status" value="1"/>
</dbReference>
<dbReference type="HAMAP" id="MF_00180">
    <property type="entry name" value="RibB"/>
    <property type="match status" value="1"/>
</dbReference>
<dbReference type="HAMAP" id="MF_01283">
    <property type="entry name" value="RibBA"/>
    <property type="match status" value="1"/>
</dbReference>
<dbReference type="InterPro" id="IPR017945">
    <property type="entry name" value="DHBP_synth_RibB-like_a/b_dom"/>
</dbReference>
<dbReference type="InterPro" id="IPR000422">
    <property type="entry name" value="DHBP_synthase_RibB"/>
</dbReference>
<dbReference type="InterPro" id="IPR032677">
    <property type="entry name" value="GTP_cyclohydro_II"/>
</dbReference>
<dbReference type="InterPro" id="IPR000926">
    <property type="entry name" value="RibA"/>
</dbReference>
<dbReference type="InterPro" id="IPR036144">
    <property type="entry name" value="RibA-like_sf"/>
</dbReference>
<dbReference type="InterPro" id="IPR016299">
    <property type="entry name" value="Riboflavin_synth_RibBA"/>
</dbReference>
<dbReference type="NCBIfam" id="NF001591">
    <property type="entry name" value="PRK00393.1"/>
    <property type="match status" value="1"/>
</dbReference>
<dbReference type="NCBIfam" id="NF006803">
    <property type="entry name" value="PRK09311.1"/>
    <property type="match status" value="1"/>
</dbReference>
<dbReference type="NCBIfam" id="TIGR00505">
    <property type="entry name" value="ribA"/>
    <property type="match status" value="1"/>
</dbReference>
<dbReference type="NCBIfam" id="TIGR00506">
    <property type="entry name" value="ribB"/>
    <property type="match status" value="1"/>
</dbReference>
<dbReference type="PANTHER" id="PTHR21327:SF18">
    <property type="entry name" value="3,4-DIHYDROXY-2-BUTANONE 4-PHOSPHATE SYNTHASE"/>
    <property type="match status" value="1"/>
</dbReference>
<dbReference type="PANTHER" id="PTHR21327">
    <property type="entry name" value="GTP CYCLOHYDROLASE II-RELATED"/>
    <property type="match status" value="1"/>
</dbReference>
<dbReference type="Pfam" id="PF00926">
    <property type="entry name" value="DHBP_synthase"/>
    <property type="match status" value="1"/>
</dbReference>
<dbReference type="Pfam" id="PF00925">
    <property type="entry name" value="GTP_cyclohydro2"/>
    <property type="match status" value="1"/>
</dbReference>
<dbReference type="PIRSF" id="PIRSF001259">
    <property type="entry name" value="RibA"/>
    <property type="match status" value="1"/>
</dbReference>
<dbReference type="SUPFAM" id="SSF142695">
    <property type="entry name" value="RibA-like"/>
    <property type="match status" value="1"/>
</dbReference>
<dbReference type="SUPFAM" id="SSF55821">
    <property type="entry name" value="YrdC/RibB"/>
    <property type="match status" value="1"/>
</dbReference>
<accession>O66679</accession>
<organism>
    <name type="scientific">Aquifex aeolicus (strain VF5)</name>
    <dbReference type="NCBI Taxonomy" id="224324"/>
    <lineage>
        <taxon>Bacteria</taxon>
        <taxon>Pseudomonadati</taxon>
        <taxon>Aquificota</taxon>
        <taxon>Aquificia</taxon>
        <taxon>Aquificales</taxon>
        <taxon>Aquificaceae</taxon>
        <taxon>Aquifex</taxon>
    </lineage>
</organism>
<protein>
    <recommendedName>
        <fullName evidence="1">Riboflavin biosynthesis protein RibBA</fullName>
    </recommendedName>
    <domain>
        <recommendedName>
            <fullName evidence="1">3,4-dihydroxy-2-butanone 4-phosphate synthase</fullName>
            <shortName evidence="1">DHBP synthase</shortName>
            <ecNumber evidence="1">4.1.99.12</ecNumber>
        </recommendedName>
    </domain>
    <domain>
        <recommendedName>
            <fullName evidence="1">GTP cyclohydrolase-2</fullName>
            <ecNumber evidence="1">3.5.4.25</ecNumber>
        </recommendedName>
        <alternativeName>
            <fullName evidence="1">GTP cyclohydrolase II</fullName>
        </alternativeName>
    </domain>
</protein>
<sequence>MSEREEFKFNTVEEAIEDIRQGKMVIVVDDPDRENEGDLVMAAEKVTPEAINFMAKYGRGLICLSLTPERCEQLDLHPMTPMNTDPKGTYFCVSIDAHPKHGTTTGISAYDRALTIKLAISPDAKPSDFVRPGHVFPLKARPGGVLERAGHTEASVDLARLAGLYPAGVICEIMKDDGTMARVPDLMEFAKKHNLKIITIADLIKYRLRRETLVEKVASAHLPTPWGVFKIHAYRHKLTGEEQVALTMGEWKEDEPVLVRVHSECLTGDVFRSFRCDCRPQLEKALEMIAKEGKGVLVYILGHEGRGIGIANKIKAYELQEKGYDTVEANEKLGYPPDLRDYGIGAQILRDLGVRKMKLMTNNPRKIVALEGFGLEVVERVPIKIEPNPYNKIYLQVKKDKLGHMF</sequence>
<proteinExistence type="inferred from homology"/>
<comment type="function">
    <text evidence="1">Catalyzes the conversion of D-ribulose 5-phosphate to formate and 3,4-dihydroxy-2-butanone 4-phosphate.</text>
</comment>
<comment type="function">
    <text evidence="1">Catalyzes the conversion of GTP to 2,5-diamino-6-ribosylamino-4(3H)-pyrimidinone 5'-phosphate (DARP), formate and pyrophosphate.</text>
</comment>
<comment type="catalytic activity">
    <reaction evidence="1">
        <text>D-ribulose 5-phosphate = (2S)-2-hydroxy-3-oxobutyl phosphate + formate + H(+)</text>
        <dbReference type="Rhea" id="RHEA:18457"/>
        <dbReference type="ChEBI" id="CHEBI:15378"/>
        <dbReference type="ChEBI" id="CHEBI:15740"/>
        <dbReference type="ChEBI" id="CHEBI:58121"/>
        <dbReference type="ChEBI" id="CHEBI:58830"/>
        <dbReference type="EC" id="4.1.99.12"/>
    </reaction>
</comment>
<comment type="catalytic activity">
    <reaction evidence="1">
        <text>GTP + 4 H2O = 2,5-diamino-6-hydroxy-4-(5-phosphoribosylamino)-pyrimidine + formate + 2 phosphate + 3 H(+)</text>
        <dbReference type="Rhea" id="RHEA:23704"/>
        <dbReference type="ChEBI" id="CHEBI:15377"/>
        <dbReference type="ChEBI" id="CHEBI:15378"/>
        <dbReference type="ChEBI" id="CHEBI:15740"/>
        <dbReference type="ChEBI" id="CHEBI:37565"/>
        <dbReference type="ChEBI" id="CHEBI:43474"/>
        <dbReference type="ChEBI" id="CHEBI:58614"/>
        <dbReference type="EC" id="3.5.4.25"/>
    </reaction>
</comment>
<comment type="cofactor">
    <cofactor evidence="1">
        <name>Mg(2+)</name>
        <dbReference type="ChEBI" id="CHEBI:18420"/>
    </cofactor>
    <cofactor evidence="1">
        <name>Mn(2+)</name>
        <dbReference type="ChEBI" id="CHEBI:29035"/>
    </cofactor>
    <text evidence="1">Binds 2 divalent metal cations per subunit. Magnesium or manganese.</text>
</comment>
<comment type="cofactor">
    <cofactor evidence="1">
        <name>Zn(2+)</name>
        <dbReference type="ChEBI" id="CHEBI:29105"/>
    </cofactor>
    <text evidence="1">Binds 1 zinc ion per subunit.</text>
</comment>
<comment type="pathway">
    <text evidence="1">Cofactor biosynthesis; riboflavin biosynthesis; 2-hydroxy-3-oxobutyl phosphate from D-ribulose 5-phosphate: step 1/1.</text>
</comment>
<comment type="pathway">
    <text evidence="1">Cofactor biosynthesis; riboflavin biosynthesis; 5-amino-6-(D-ribitylamino)uracil from GTP: step 1/4.</text>
</comment>
<comment type="similarity">
    <text evidence="1">In the N-terminal section; belongs to the DHBP synthase family.</text>
</comment>
<comment type="similarity">
    <text evidence="1">In the C-terminal section; belongs to the GTP cyclohydrolase II family.</text>
</comment>